<comment type="function">
    <text>Catalyzes the synthesis of mevalonate. The specific precursor of all isoprenoid compounds present in plants.</text>
</comment>
<comment type="catalytic activity">
    <reaction evidence="3">
        <text>(R)-mevalonate + 2 NADP(+) + CoA = (3S)-3-hydroxy-3-methylglutaryl-CoA + 2 NADPH + 2 H(+)</text>
        <dbReference type="Rhea" id="RHEA:15989"/>
        <dbReference type="ChEBI" id="CHEBI:15378"/>
        <dbReference type="ChEBI" id="CHEBI:36464"/>
        <dbReference type="ChEBI" id="CHEBI:43074"/>
        <dbReference type="ChEBI" id="CHEBI:57287"/>
        <dbReference type="ChEBI" id="CHEBI:57783"/>
        <dbReference type="ChEBI" id="CHEBI:58349"/>
        <dbReference type="EC" id="1.1.1.34"/>
    </reaction>
</comment>
<comment type="pathway">
    <text>Metabolic intermediate biosynthesis; (R)-mevalonate biosynthesis; (R)-mevalonate from acetyl-CoA: step 3/3.</text>
</comment>
<comment type="subcellular location">
    <subcellularLocation>
        <location>Endoplasmic reticulum membrane</location>
        <topology>Multi-pass membrane protein</topology>
    </subcellularLocation>
    <subcellularLocation>
        <location>Mitochondrion membrane</location>
        <topology>Multi-pass membrane protein</topology>
    </subcellularLocation>
    <subcellularLocation>
        <location>Plastid membrane</location>
        <topology>Multi-pass membrane protein</topology>
    </subcellularLocation>
</comment>
<comment type="similarity">
    <text evidence="4">Belongs to the HMG-CoA reductase family.</text>
</comment>
<evidence type="ECO:0000250" key="1"/>
<evidence type="ECO:0000255" key="2"/>
<evidence type="ECO:0000255" key="3">
    <source>
        <dbReference type="PROSITE-ProRule" id="PRU10003"/>
    </source>
</evidence>
<evidence type="ECO:0000305" key="4"/>
<protein>
    <recommendedName>
        <fullName>3-hydroxy-3-methylglutaryl-coenzyme A reductase 2</fullName>
        <shortName>HMG-CoA reductase 2</shortName>
        <ecNumber>1.1.1.34</ecNumber>
    </recommendedName>
</protein>
<gene>
    <name type="primary">HMG2</name>
</gene>
<name>HMDH2_GOSHI</name>
<keyword id="KW-0256">Endoplasmic reticulum</keyword>
<keyword id="KW-0325">Glycoprotein</keyword>
<keyword id="KW-0414">Isoprene biosynthesis</keyword>
<keyword id="KW-0472">Membrane</keyword>
<keyword id="KW-0496">Mitochondrion</keyword>
<keyword id="KW-0521">NADP</keyword>
<keyword id="KW-0560">Oxidoreductase</keyword>
<keyword id="KW-0934">Plastid</keyword>
<keyword id="KW-1185">Reference proteome</keyword>
<keyword id="KW-0812">Transmembrane</keyword>
<keyword id="KW-1133">Transmembrane helix</keyword>
<sequence length="628" mass="67603">MEASRRSAVKPVIVLKPSKRFPLVEDTPGKASDALPLPLYLTNAVFFTLFFTVVYFLLSRWREKIRASIPLHAVTFPEIVAIFAFVASLIYLLGFFGIDFVQSLIIRPSGDVWSGEDYEEENEVLLHEEDARTVPCGQALDCSVPSLPHMARNVTAQRLFDEKPVRVATEEDARKVSCGQAVDCSLHSLPPRPPIVTSQKLFHEKTVIVTTEEDEEIIKSVVAGTLPSYSLESKLGDCKRAAAIRREALQRLTGRSLSGLPLDGFDYESILGQCCEMPVGYVQIPVGIAGPLLLNGREYSVPMATTEGCLVASTNRGCKAIHLSGGATSILLKDGMTRAPVVRFSTAKRAAELKFYLEDPENFDTLAVVFNRSSRFGRLQSIKCAIAGKNLYLRFTCSTGDAMGMNMVSKGVQNVLDFLQTDFPDMDVIGISGNFCSDKKPAAVNWIEGRGKSVVCEAIIEGDVVRKVLKTSVESLVELNMLKNLTGSAMAGALGGFNAHASNIVTAIYIATGQDPAQNVESSHCITMMEAVNDGKDLHISVTMPSIEVGTVGGGTQLASQSACLNLLGVKGASKDVAGANSRMLATIVTGAVLAGELSLMSALAAGQLVKSHMKYNRSSKDMSNLSS</sequence>
<reference key="1">
    <citation type="online journal article" date="1998" name="Plant Gene Register">
        <title>Two genomic clones encoding 3-hydroxy-3-methylglutaryl-coenzyme A reductase from cotton (Gossypium hirsutum L.).</title>
        <authorList>
            <person name="Loguercio L.L."/>
            <person name="Wilkins T.A."/>
        </authorList>
        <locator>PGR98-031</locator>
    </citation>
    <scope>NUCLEOTIDE SEQUENCE [GENOMIC DNA]</scope>
    <source>
        <strain>cv. Acala SJ2</strain>
    </source>
</reference>
<proteinExistence type="inferred from homology"/>
<feature type="chain" id="PRO_0000114439" description="3-hydroxy-3-methylglutaryl-coenzyme A reductase 2">
    <location>
        <begin position="1"/>
        <end position="628"/>
    </location>
</feature>
<feature type="transmembrane region" description="Helical" evidence="2">
    <location>
        <begin position="38"/>
        <end position="58"/>
    </location>
</feature>
<feature type="transmembrane region" description="Helical" evidence="2">
    <location>
        <begin position="78"/>
        <end position="98"/>
    </location>
</feature>
<feature type="region of interest" description="Linker" evidence="1">
    <location>
        <begin position="99"/>
        <end position="212"/>
    </location>
</feature>
<feature type="region of interest" description="Catalytic" evidence="1">
    <location>
        <begin position="213"/>
        <end position="628"/>
    </location>
</feature>
<feature type="active site" description="Charge relay system" evidence="1">
    <location>
        <position position="307"/>
    </location>
</feature>
<feature type="active site" description="Charge relay system" evidence="1">
    <location>
        <position position="439"/>
    </location>
</feature>
<feature type="active site" description="Charge relay system" evidence="1">
    <location>
        <position position="515"/>
    </location>
</feature>
<feature type="active site" description="Proton donor" evidence="3">
    <location>
        <position position="613"/>
    </location>
</feature>
<feature type="glycosylation site" description="N-linked (GlcNAc...) asparagine" evidence="2">
    <location>
        <position position="153"/>
    </location>
</feature>
<feature type="glycosylation site" description="N-linked (GlcNAc...) asparagine" evidence="2">
    <location>
        <position position="371"/>
    </location>
</feature>
<feature type="glycosylation site" description="N-linked (GlcNAc...) asparagine" evidence="2">
    <location>
        <position position="484"/>
    </location>
</feature>
<feature type="glycosylation site" description="N-linked (GlcNAc...) asparagine" evidence="2">
    <location>
        <position position="617"/>
    </location>
</feature>
<feature type="glycosylation site" description="N-linked (GlcNAc...) asparagine" evidence="2">
    <location>
        <position position="625"/>
    </location>
</feature>
<organism>
    <name type="scientific">Gossypium hirsutum</name>
    <name type="common">Upland cotton</name>
    <name type="synonym">Gossypium mexicanum</name>
    <dbReference type="NCBI Taxonomy" id="3635"/>
    <lineage>
        <taxon>Eukaryota</taxon>
        <taxon>Viridiplantae</taxon>
        <taxon>Streptophyta</taxon>
        <taxon>Embryophyta</taxon>
        <taxon>Tracheophyta</taxon>
        <taxon>Spermatophyta</taxon>
        <taxon>Magnoliopsida</taxon>
        <taxon>eudicotyledons</taxon>
        <taxon>Gunneridae</taxon>
        <taxon>Pentapetalae</taxon>
        <taxon>rosids</taxon>
        <taxon>malvids</taxon>
        <taxon>Malvales</taxon>
        <taxon>Malvaceae</taxon>
        <taxon>Malvoideae</taxon>
        <taxon>Gossypium</taxon>
    </lineage>
</organism>
<accession>O64967</accession>
<dbReference type="EC" id="1.1.1.34"/>
<dbReference type="EMBL" id="AF038046">
    <property type="protein sequence ID" value="AAC05089.1"/>
    <property type="molecule type" value="Genomic_DNA"/>
</dbReference>
<dbReference type="PIR" id="T09785">
    <property type="entry name" value="T09785"/>
</dbReference>
<dbReference type="RefSeq" id="XP_016674677.1">
    <property type="nucleotide sequence ID" value="XM_016819188.1"/>
</dbReference>
<dbReference type="SMR" id="O64967"/>
<dbReference type="STRING" id="3635.O64967"/>
<dbReference type="GlyCosmos" id="O64967">
    <property type="glycosylation" value="5 sites, No reported glycans"/>
</dbReference>
<dbReference type="PaxDb" id="3635-O64967"/>
<dbReference type="KEGG" id="ghi:107894010"/>
<dbReference type="OMA" id="NPENFDT"/>
<dbReference type="UniPathway" id="UPA00058">
    <property type="reaction ID" value="UER00103"/>
</dbReference>
<dbReference type="Proteomes" id="UP000189702">
    <property type="component" value="Chromosome 15"/>
</dbReference>
<dbReference type="GO" id="GO:0005789">
    <property type="term" value="C:endoplasmic reticulum membrane"/>
    <property type="evidence" value="ECO:0000318"/>
    <property type="project" value="GO_Central"/>
</dbReference>
<dbReference type="GO" id="GO:0031966">
    <property type="term" value="C:mitochondrial membrane"/>
    <property type="evidence" value="ECO:0007669"/>
    <property type="project" value="UniProtKB-SubCell"/>
</dbReference>
<dbReference type="GO" id="GO:0005778">
    <property type="term" value="C:peroxisomal membrane"/>
    <property type="evidence" value="ECO:0000318"/>
    <property type="project" value="GO_Central"/>
</dbReference>
<dbReference type="GO" id="GO:0042170">
    <property type="term" value="C:plastid membrane"/>
    <property type="evidence" value="ECO:0007669"/>
    <property type="project" value="UniProtKB-SubCell"/>
</dbReference>
<dbReference type="GO" id="GO:0004420">
    <property type="term" value="F:hydroxymethylglutaryl-CoA reductase (NADPH) activity"/>
    <property type="evidence" value="ECO:0000318"/>
    <property type="project" value="GO_Central"/>
</dbReference>
<dbReference type="GO" id="GO:0015936">
    <property type="term" value="P:coenzyme A metabolic process"/>
    <property type="evidence" value="ECO:0007669"/>
    <property type="project" value="InterPro"/>
</dbReference>
<dbReference type="GO" id="GO:0008299">
    <property type="term" value="P:isoprenoid biosynthetic process"/>
    <property type="evidence" value="ECO:0000318"/>
    <property type="project" value="GO_Central"/>
</dbReference>
<dbReference type="GO" id="GO:0016126">
    <property type="term" value="P:sterol biosynthetic process"/>
    <property type="evidence" value="ECO:0000318"/>
    <property type="project" value="GO_Central"/>
</dbReference>
<dbReference type="CDD" id="cd00643">
    <property type="entry name" value="HMG-CoA_reductase_classI"/>
    <property type="match status" value="1"/>
</dbReference>
<dbReference type="FunFam" id="1.10.3270.10:FF:000002">
    <property type="entry name" value="3-hydroxy-3-methylglutaryl coenzyme A reductase"/>
    <property type="match status" value="1"/>
</dbReference>
<dbReference type="FunFam" id="3.30.70.420:FF:000001">
    <property type="entry name" value="3-hydroxy-3-methylglutaryl coenzyme A reductase"/>
    <property type="match status" value="1"/>
</dbReference>
<dbReference type="FunFam" id="3.90.770.10:FF:000001">
    <property type="entry name" value="3-hydroxy-3-methylglutaryl coenzyme A reductase"/>
    <property type="match status" value="1"/>
</dbReference>
<dbReference type="Gene3D" id="3.90.770.10">
    <property type="entry name" value="3-hydroxy-3-methylglutaryl-coenzyme A Reductase, Chain A, domain 2"/>
    <property type="match status" value="1"/>
</dbReference>
<dbReference type="Gene3D" id="1.10.3270.10">
    <property type="entry name" value="HMGR, N-terminal domain"/>
    <property type="match status" value="1"/>
</dbReference>
<dbReference type="Gene3D" id="3.30.70.420">
    <property type="entry name" value="Hydroxymethylglutaryl-CoA reductase, class I/II, NAD/NADP-binding domain"/>
    <property type="match status" value="1"/>
</dbReference>
<dbReference type="InterPro" id="IPR002202">
    <property type="entry name" value="HMG_CoA_Rdtase"/>
</dbReference>
<dbReference type="InterPro" id="IPR023074">
    <property type="entry name" value="HMG_CoA_Rdtase_cat_sf"/>
</dbReference>
<dbReference type="InterPro" id="IPR023076">
    <property type="entry name" value="HMG_CoA_Rdtase_CS"/>
</dbReference>
<dbReference type="InterPro" id="IPR004554">
    <property type="entry name" value="HMG_CoA_Rdtase_eu_arc"/>
</dbReference>
<dbReference type="InterPro" id="IPR023282">
    <property type="entry name" value="HMG_CoA_Rdtase_N"/>
</dbReference>
<dbReference type="InterPro" id="IPR009023">
    <property type="entry name" value="HMG_CoA_Rdtase_NAD(P)-bd_sf"/>
</dbReference>
<dbReference type="InterPro" id="IPR009029">
    <property type="entry name" value="HMG_CoA_Rdtase_sub-bd_dom_sf"/>
</dbReference>
<dbReference type="NCBIfam" id="TIGR00533">
    <property type="entry name" value="HMG_CoA_R_NADP"/>
    <property type="match status" value="1"/>
</dbReference>
<dbReference type="PANTHER" id="PTHR10572">
    <property type="entry name" value="3-HYDROXY-3-METHYLGLUTARYL-COENZYME A REDUCTASE"/>
    <property type="match status" value="1"/>
</dbReference>
<dbReference type="PANTHER" id="PTHR10572:SF44">
    <property type="entry name" value="3-HYDROXY-3-METHYLGLUTARYL-COENZYME A REDUCTASE 1"/>
    <property type="match status" value="1"/>
</dbReference>
<dbReference type="Pfam" id="PF00368">
    <property type="entry name" value="HMG-CoA_red"/>
    <property type="match status" value="1"/>
</dbReference>
<dbReference type="PRINTS" id="PR00071">
    <property type="entry name" value="HMGCOARDTASE"/>
</dbReference>
<dbReference type="SUPFAM" id="SSF55035">
    <property type="entry name" value="NAD-binding domain of HMG-CoA reductase"/>
    <property type="match status" value="1"/>
</dbReference>
<dbReference type="SUPFAM" id="SSF56542">
    <property type="entry name" value="Substrate-binding domain of HMG-CoA reductase"/>
    <property type="match status" value="1"/>
</dbReference>
<dbReference type="PROSITE" id="PS00066">
    <property type="entry name" value="HMG_COA_REDUCTASE_1"/>
    <property type="match status" value="1"/>
</dbReference>
<dbReference type="PROSITE" id="PS00318">
    <property type="entry name" value="HMG_COA_REDUCTASE_2"/>
    <property type="match status" value="1"/>
</dbReference>
<dbReference type="PROSITE" id="PS01192">
    <property type="entry name" value="HMG_COA_REDUCTASE_3"/>
    <property type="match status" value="1"/>
</dbReference>
<dbReference type="PROSITE" id="PS50065">
    <property type="entry name" value="HMG_COA_REDUCTASE_4"/>
    <property type="match status" value="1"/>
</dbReference>